<name>LECA_MACWI</name>
<evidence type="ECO:0000250" key="1">
    <source>
        <dbReference type="UniProtKB" id="P08902"/>
    </source>
</evidence>
<evidence type="ECO:0000250" key="2">
    <source>
        <dbReference type="UniProtKB" id="P58907"/>
    </source>
</evidence>
<evidence type="ECO:0000255" key="3"/>
<evidence type="ECO:0000269" key="4">
    <source>
    </source>
</evidence>
<evidence type="ECO:0000269" key="5">
    <source>
    </source>
</evidence>
<evidence type="ECO:0000303" key="6">
    <source>
    </source>
</evidence>
<evidence type="ECO:0000305" key="7"/>
<evidence type="ECO:0007829" key="8">
    <source>
        <dbReference type="PDB" id="3SH3"/>
    </source>
</evidence>
<feature type="chain" id="PRO_0000395393" description="Lectin alpha chain">
    <location>
        <begin position="1"/>
        <end position="237"/>
    </location>
</feature>
<feature type="chain" id="PRO_0000395394" description="Lectin beta chain" evidence="4">
    <location>
        <begin position="1"/>
        <end position="118"/>
    </location>
</feature>
<feature type="chain" id="PRO_0000395395" description="Lectin gamma chain" evidence="4">
    <location>
        <begin position="119"/>
        <end position="237"/>
    </location>
</feature>
<feature type="binding site" evidence="5">
    <location>
        <position position="8"/>
    </location>
    <ligand>
        <name>Mn(2+)</name>
        <dbReference type="ChEBI" id="CHEBI:29035"/>
    </ligand>
</feature>
<feature type="binding site" evidence="5">
    <location>
        <position position="10"/>
    </location>
    <ligand>
        <name>Ca(2+)</name>
        <dbReference type="ChEBI" id="CHEBI:29108"/>
    </ligand>
</feature>
<feature type="binding site" evidence="5">
    <location>
        <position position="10"/>
    </location>
    <ligand>
        <name>Mn(2+)</name>
        <dbReference type="ChEBI" id="CHEBI:29035"/>
    </ligand>
</feature>
<feature type="binding site" evidence="5">
    <location>
        <position position="12"/>
    </location>
    <ligand>
        <name>a carbohydrate</name>
        <dbReference type="ChEBI" id="CHEBI:16646"/>
    </ligand>
</feature>
<feature type="binding site" evidence="5">
    <location>
        <position position="12"/>
    </location>
    <ligand>
        <name>Ca(2+)</name>
        <dbReference type="ChEBI" id="CHEBI:29108"/>
    </ligand>
</feature>
<feature type="binding site" evidence="5">
    <location>
        <position position="14"/>
    </location>
    <ligand>
        <name>Ca(2+)</name>
        <dbReference type="ChEBI" id="CHEBI:29108"/>
    </ligand>
</feature>
<feature type="binding site" evidence="5">
    <location>
        <position position="19"/>
    </location>
    <ligand>
        <name>Ca(2+)</name>
        <dbReference type="ChEBI" id="CHEBI:29108"/>
    </ligand>
</feature>
<feature type="binding site" evidence="5">
    <location>
        <position position="19"/>
    </location>
    <ligand>
        <name>Mn(2+)</name>
        <dbReference type="ChEBI" id="CHEBI:29035"/>
    </ligand>
</feature>
<feature type="binding site" evidence="5">
    <location>
        <position position="24"/>
    </location>
    <ligand>
        <name>Mn(2+)</name>
        <dbReference type="ChEBI" id="CHEBI:29035"/>
    </ligand>
</feature>
<feature type="binding site" evidence="5">
    <location>
        <begin position="99"/>
        <end position="100"/>
    </location>
    <ligand>
        <name>a carbohydrate</name>
        <dbReference type="ChEBI" id="CHEBI:16646"/>
    </ligand>
</feature>
<feature type="binding site" evidence="5">
    <location>
        <position position="208"/>
    </location>
    <ligand>
        <name>Ca(2+)</name>
        <dbReference type="ChEBI" id="CHEBI:29108"/>
    </ligand>
</feature>
<feature type="binding site" evidence="5">
    <location>
        <position position="228"/>
    </location>
    <ligand>
        <name>a carbohydrate</name>
        <dbReference type="ChEBI" id="CHEBI:16646"/>
    </ligand>
</feature>
<feature type="strand" evidence="8">
    <location>
        <begin position="4"/>
        <end position="10"/>
    </location>
</feature>
<feature type="helix" evidence="8">
    <location>
        <begin position="15"/>
        <end position="17"/>
    </location>
</feature>
<feature type="strand" evidence="8">
    <location>
        <begin position="24"/>
        <end position="33"/>
    </location>
</feature>
<feature type="strand" evidence="8">
    <location>
        <begin position="35"/>
        <end position="39"/>
    </location>
</feature>
<feature type="strand" evidence="8">
    <location>
        <begin position="46"/>
        <end position="55"/>
    </location>
</feature>
<feature type="turn" evidence="8">
    <location>
        <begin position="56"/>
        <end position="59"/>
    </location>
</feature>
<feature type="strand" evidence="8">
    <location>
        <begin position="60"/>
        <end position="67"/>
    </location>
</feature>
<feature type="strand" evidence="8">
    <location>
        <begin position="73"/>
        <end position="78"/>
    </location>
</feature>
<feature type="helix" evidence="8">
    <location>
        <begin position="81"/>
        <end position="83"/>
    </location>
</feature>
<feature type="strand" evidence="8">
    <location>
        <begin position="87"/>
        <end position="96"/>
    </location>
</feature>
<feature type="strand" evidence="8">
    <location>
        <begin position="98"/>
        <end position="100"/>
    </location>
</feature>
<feature type="strand" evidence="8">
    <location>
        <begin position="105"/>
        <end position="116"/>
    </location>
</feature>
<feature type="strand" evidence="8">
    <location>
        <begin position="124"/>
        <end position="132"/>
    </location>
</feature>
<feature type="strand" evidence="8">
    <location>
        <begin position="140"/>
        <end position="144"/>
    </location>
</feature>
<feature type="strand" evidence="8">
    <location>
        <begin position="170"/>
        <end position="177"/>
    </location>
</feature>
<feature type="strand" evidence="8">
    <location>
        <begin position="187"/>
        <end position="198"/>
    </location>
</feature>
<feature type="strand" evidence="8">
    <location>
        <begin position="202"/>
        <end position="205"/>
    </location>
</feature>
<feature type="strand" evidence="8">
    <location>
        <begin position="209"/>
        <end position="216"/>
    </location>
</feature>
<feature type="helix" evidence="8">
    <location>
        <begin position="227"/>
        <end position="229"/>
    </location>
</feature>
<feature type="turn" evidence="8">
    <location>
        <begin position="230"/>
        <end position="232"/>
    </location>
</feature>
<protein>
    <recommendedName>
        <fullName evidence="6">Lectin alpha chain</fullName>
    </recommendedName>
    <alternativeName>
        <fullName evidence="6">DwL</fullName>
    </alternativeName>
    <component>
        <recommendedName>
            <fullName evidence="6">Lectin beta chain</fullName>
        </recommendedName>
    </component>
    <component>
        <recommendedName>
            <fullName evidence="6">Lectin gamma chain</fullName>
        </recommendedName>
    </component>
</protein>
<accession>P86624</accession>
<organism>
    <name type="scientific">Macropsychanthus wilsonii</name>
    <name type="common">Wilson's clusterpea</name>
    <name type="synonym">Dioclea wilsonii</name>
    <dbReference type="NCBI Taxonomy" id="763456"/>
    <lineage>
        <taxon>Eukaryota</taxon>
        <taxon>Viridiplantae</taxon>
        <taxon>Streptophyta</taxon>
        <taxon>Embryophyta</taxon>
        <taxon>Tracheophyta</taxon>
        <taxon>Spermatophyta</taxon>
        <taxon>Magnoliopsida</taxon>
        <taxon>eudicotyledons</taxon>
        <taxon>Gunneridae</taxon>
        <taxon>Pentapetalae</taxon>
        <taxon>rosids</taxon>
        <taxon>fabids</taxon>
        <taxon>Fabales</taxon>
        <taxon>Fabaceae</taxon>
        <taxon>Papilionoideae</taxon>
        <taxon>50 kb inversion clade</taxon>
        <taxon>NPAAA clade</taxon>
        <taxon>indigoferoid/millettioid clade</taxon>
        <taxon>Phaseoleae</taxon>
        <taxon>Macropsychanthus</taxon>
    </lineage>
</organism>
<comment type="function">
    <text evidence="4 5">D-mannose/D-glucose-binding lectin with hemagglutinating activity towards rabbit and human erythrocytes. In rats, elicits an acute inflammatory response by inducing neutrophil migration and induces dose-dependent paw edema.</text>
</comment>
<comment type="biophysicochemical properties">
    <temperatureDependence>
        <text evidence="4">Hemagglutinating activity stable up to 60 degrees Celsius but diminishes with higher temperatures and is absent at 100 degrees Celsius.</text>
    </temperatureDependence>
</comment>
<comment type="subunit">
    <text evidence="4 5">Homotetramer.</text>
</comment>
<comment type="subcellular location">
    <subcellularLocation>
        <location evidence="2">Vacuole</location>
        <location evidence="2">Aleurone grain</location>
    </subcellularLocation>
</comment>
<comment type="PTM">
    <text evidence="1">The beta and gamma chains are produced by partial proteolytic processing of the lectin alpha chain by an asparaginyl endopeptidase.</text>
</comment>
<comment type="mass spectrometry" mass="25636.0" error="2.0" method="Electrospray" evidence="4">
    <molecule>Lectin alpha chain</molecule>
</comment>
<comment type="miscellaneous">
    <text>Binds one manganese (or another transition metal) ion and one calcium ion. The metal ions are essential for the saccharide-binding and cell-agglutinating activities.</text>
</comment>
<comment type="similarity">
    <text evidence="3">Belongs to the leguminous lectin family.</text>
</comment>
<dbReference type="PDB" id="3SH3">
    <property type="method" value="X-ray"/>
    <property type="resolution" value="2.30 A"/>
    <property type="chains" value="A=1-237"/>
</dbReference>
<dbReference type="PDBsum" id="3SH3"/>
<dbReference type="SMR" id="P86624"/>
<dbReference type="UniLectin" id="P86624"/>
<dbReference type="EvolutionaryTrace" id="P86624"/>
<dbReference type="GO" id="GO:0033095">
    <property type="term" value="C:aleurone grain"/>
    <property type="evidence" value="ECO:0007669"/>
    <property type="project" value="UniProtKB-SubCell"/>
</dbReference>
<dbReference type="GO" id="GO:0005773">
    <property type="term" value="C:vacuole"/>
    <property type="evidence" value="ECO:0007669"/>
    <property type="project" value="UniProtKB-KW"/>
</dbReference>
<dbReference type="GO" id="GO:0005509">
    <property type="term" value="F:calcium ion binding"/>
    <property type="evidence" value="ECO:0000314"/>
    <property type="project" value="UniProtKB"/>
</dbReference>
<dbReference type="GO" id="GO:0005536">
    <property type="term" value="F:D-glucose binding"/>
    <property type="evidence" value="ECO:0000314"/>
    <property type="project" value="UniProtKB"/>
</dbReference>
<dbReference type="GO" id="GO:0005537">
    <property type="term" value="F:D-mannose binding"/>
    <property type="evidence" value="ECO:0000314"/>
    <property type="project" value="UniProtKB"/>
</dbReference>
<dbReference type="GO" id="GO:0030145">
    <property type="term" value="F:manganese ion binding"/>
    <property type="evidence" value="ECO:0000314"/>
    <property type="project" value="UniProtKB"/>
</dbReference>
<dbReference type="CDD" id="cd06899">
    <property type="entry name" value="lectin_legume_LecRK_Arcelin_ConA"/>
    <property type="match status" value="1"/>
</dbReference>
<dbReference type="FunFam" id="2.60.120.200:FF:000227">
    <property type="entry name" value="Concanavalin-A"/>
    <property type="match status" value="1"/>
</dbReference>
<dbReference type="Gene3D" id="2.60.120.200">
    <property type="match status" value="1"/>
</dbReference>
<dbReference type="InterPro" id="IPR013320">
    <property type="entry name" value="ConA-like_dom_sf"/>
</dbReference>
<dbReference type="InterPro" id="IPR000985">
    <property type="entry name" value="Lectin_LegA_CS"/>
</dbReference>
<dbReference type="InterPro" id="IPR019825">
    <property type="entry name" value="Lectin_legB_Mn/Ca_BS"/>
</dbReference>
<dbReference type="InterPro" id="IPR001220">
    <property type="entry name" value="Legume_lectin_dom"/>
</dbReference>
<dbReference type="InterPro" id="IPR050258">
    <property type="entry name" value="Leguminous_Lectin"/>
</dbReference>
<dbReference type="PANTHER" id="PTHR32401">
    <property type="entry name" value="CONCANAVALIN A-LIKE LECTIN FAMILY PROTEIN"/>
    <property type="match status" value="1"/>
</dbReference>
<dbReference type="PANTHER" id="PTHR32401:SF47">
    <property type="entry name" value="LEGUME LECTIN DOMAIN-CONTAINING PROTEIN"/>
    <property type="match status" value="1"/>
</dbReference>
<dbReference type="Pfam" id="PF00139">
    <property type="entry name" value="Lectin_legB"/>
    <property type="match status" value="2"/>
</dbReference>
<dbReference type="SUPFAM" id="SSF49899">
    <property type="entry name" value="Concanavalin A-like lectins/glucanases"/>
    <property type="match status" value="1"/>
</dbReference>
<dbReference type="PROSITE" id="PS00308">
    <property type="entry name" value="LECTIN_LEGUME_ALPHA"/>
    <property type="match status" value="1"/>
</dbReference>
<dbReference type="PROSITE" id="PS00307">
    <property type="entry name" value="LECTIN_LEGUME_BETA"/>
    <property type="match status" value="1"/>
</dbReference>
<keyword id="KW-0002">3D-structure</keyword>
<keyword id="KW-0106">Calcium</keyword>
<keyword id="KW-0903">Direct protein sequencing</keyword>
<keyword id="KW-0348">Hemagglutinin</keyword>
<keyword id="KW-0430">Lectin</keyword>
<keyword id="KW-0464">Manganese</keyword>
<keyword id="KW-0465">Mannose-binding</keyword>
<keyword id="KW-0479">Metal-binding</keyword>
<keyword id="KW-0926">Vacuole</keyword>
<sequence length="237" mass="25635">ADTIVAVELDSYPNTDIGDPNYPHIGIDIKSIRSKSTARWNMQTGKVGTVHISYNSVAKRLSAVVSYSGSSSTTVSYDVDLNNVLPEWVRVGLSATTGLYKETNTILSWSFTSKLKTNSIADENSLHFSFHKFSQNPKDLILQGDAFTDSDGNLELTKVSNSGDPQGNSVGRALFYAPVHIWEKSAVVASFDATFTFLIKSPDREPADGITFFIANTDTSIPSGSGGRLLGLFPDAN</sequence>
<reference evidence="7" key="1">
    <citation type="journal article" date="2011" name="Molecules">
        <title>Crystallization and characterization of an inflammatory lectin purified from the seeds of Dioclea wilsonii.</title>
        <authorList>
            <person name="Rangel T.B."/>
            <person name="Assreuy A.M."/>
            <person name="Pires Ade F."/>
            <person name="Carvalho A.U."/>
            <person name="Benevides R.G."/>
            <person name="Simoes Rda C."/>
            <person name="Silva H.C."/>
            <person name="Bezerra M.J."/>
            <person name="Nascimento A.S."/>
            <person name="Nascimento K.S."/>
            <person name="Nagano C.S."/>
            <person name="Sampaio A.H."/>
            <person name="Delatorre P."/>
            <person name="Rocha B.A."/>
            <person name="Fernandes P.M."/>
            <person name="Cavada B.S."/>
        </authorList>
    </citation>
    <scope>PROTEIN SEQUENCE</scope>
    <scope>FUNCTION</scope>
    <scope>BIOPHYSICOCHEMICAL PROPERTIES</scope>
    <scope>SUBUNIT</scope>
    <scope>MASS SPECTROMETRY</scope>
    <scope>MANGANESE-BINDING</scope>
    <scope>CALCIUM-BINDING</scope>
    <source>
        <tissue evidence="4">Seed</tissue>
    </source>
</reference>
<reference evidence="7" key="2">
    <citation type="journal article" date="2012" name="Biochimie">
        <title>Crystal structure of a pro-inflammatory lectin from the seeds of Dioclea wilsonii Standl.</title>
        <authorList>
            <person name="Rangel T.B."/>
            <person name="Rocha B.A."/>
            <person name="Bezerra G.A."/>
            <person name="Assreuy A.M."/>
            <person name="Pires Ade F."/>
            <person name="do Nascimento A.S."/>
            <person name="Bezerra M.J."/>
            <person name="do Nascimento K.S."/>
            <person name="Nagano C.S."/>
            <person name="Sampaio A.H."/>
            <person name="Gruber K."/>
            <person name="Delatorre P."/>
            <person name="Fernandes P.M."/>
            <person name="Cavada B.S."/>
        </authorList>
    </citation>
    <scope>X-RAY CRYSTALLOGRAPHY (2.3 ANGSTROMS)</scope>
    <scope>IN COMPLEX WITH CARBOHYDRATE; CALCIUM AND MANGANESE IONS</scope>
    <scope>FUNCTION</scope>
    <scope>SUBUNIT</scope>
    <source>
        <tissue evidence="5">Seed</tissue>
    </source>
</reference>
<proteinExistence type="evidence at protein level"/>